<organism>
    <name type="scientific">Escherichia coli (strain K12)</name>
    <dbReference type="NCBI Taxonomy" id="83333"/>
    <lineage>
        <taxon>Bacteria</taxon>
        <taxon>Pseudomonadati</taxon>
        <taxon>Pseudomonadota</taxon>
        <taxon>Gammaproteobacteria</taxon>
        <taxon>Enterobacterales</taxon>
        <taxon>Enterobacteriaceae</taxon>
        <taxon>Escherichia</taxon>
    </lineage>
</organism>
<gene>
    <name type="primary">yheT</name>
    <name type="ordered locus">b3353</name>
    <name type="ordered locus">JW3316</name>
</gene>
<keyword id="KW-0378">Hydrolase</keyword>
<keyword id="KW-1185">Reference proteome</keyword>
<keyword id="KW-0719">Serine esterase</keyword>
<name>YHET_ECOLI</name>
<comment type="similarity">
    <text evidence="3">Belongs to the AB hydrolase superfamily. AB hydrolase 4 family.</text>
</comment>
<sequence length="340" mass="38495">MAQITTTDANEFSSSAEFIPMRGFSNCHLQTMLPRLFRRQVKFTPYWQRLELPDGDFVDLAWSENPAQAQHKPRLVVFHGLEGSLNSPYAHGLVEAAQKRGWLGVVMHFRGCSGEPNRMHRIYHSGETEDASWFLRWLQREFGHAPTAAVGYSLGGNMLACLLAKEGNDLPVDAAVIVSAPFMLEACSYHMEKGFSRVYQRYLLNLLKANAARKLAAYPGTLPINLAQLKSVRRIREFDDLITARIHGYADAIDYYRQCSAMPMLNRIAKPTLIIHAKDDPFMDHQVIPKPESLPPQVEYQLTEHGGHVGFIGGTLLHPQMWLESRIPDWLTTYLEAKSC</sequence>
<accession>P45524</accession>
<accession>Q2M719</accession>
<protein>
    <recommendedName>
        <fullName>Putative esterase YheT</fullName>
        <ecNumber>3.1.1.-</ecNumber>
    </recommendedName>
</protein>
<proteinExistence type="inferred from homology"/>
<feature type="chain" id="PRO_0000212461" description="Putative esterase YheT">
    <location>
        <begin position="1"/>
        <end position="340"/>
    </location>
</feature>
<feature type="domain" description="AB hydrolase-1" evidence="2">
    <location>
        <begin position="73"/>
        <end position="312"/>
    </location>
</feature>
<feature type="active site" description="Charge relay system" evidence="1">
    <location>
        <position position="153"/>
    </location>
</feature>
<feature type="active site" description="Charge relay system" evidence="1">
    <location>
        <position position="280"/>
    </location>
</feature>
<feature type="active site" description="Charge relay system" evidence="1">
    <location>
        <position position="308"/>
    </location>
</feature>
<reference key="1">
    <citation type="journal article" date="1997" name="Science">
        <title>The complete genome sequence of Escherichia coli K-12.</title>
        <authorList>
            <person name="Blattner F.R."/>
            <person name="Plunkett G. III"/>
            <person name="Bloch C.A."/>
            <person name="Perna N.T."/>
            <person name="Burland V."/>
            <person name="Riley M."/>
            <person name="Collado-Vides J."/>
            <person name="Glasner J.D."/>
            <person name="Rode C.K."/>
            <person name="Mayhew G.F."/>
            <person name="Gregor J."/>
            <person name="Davis N.W."/>
            <person name="Kirkpatrick H.A."/>
            <person name="Goeden M.A."/>
            <person name="Rose D.J."/>
            <person name="Mau B."/>
            <person name="Shao Y."/>
        </authorList>
    </citation>
    <scope>NUCLEOTIDE SEQUENCE [LARGE SCALE GENOMIC DNA]</scope>
    <source>
        <strain>K12 / MG1655 / ATCC 47076</strain>
    </source>
</reference>
<reference key="2">
    <citation type="journal article" date="2006" name="Mol. Syst. Biol.">
        <title>Highly accurate genome sequences of Escherichia coli K-12 strains MG1655 and W3110.</title>
        <authorList>
            <person name="Hayashi K."/>
            <person name="Morooka N."/>
            <person name="Yamamoto Y."/>
            <person name="Fujita K."/>
            <person name="Isono K."/>
            <person name="Choi S."/>
            <person name="Ohtsubo E."/>
            <person name="Baba T."/>
            <person name="Wanner B.L."/>
            <person name="Mori H."/>
            <person name="Horiuchi T."/>
        </authorList>
    </citation>
    <scope>NUCLEOTIDE SEQUENCE [LARGE SCALE GENOMIC DNA]</scope>
    <source>
        <strain>K12 / W3110 / ATCC 27325 / DSM 5911</strain>
    </source>
</reference>
<evidence type="ECO:0000250" key="1"/>
<evidence type="ECO:0000255" key="2"/>
<evidence type="ECO:0000305" key="3"/>
<dbReference type="EC" id="3.1.1.-"/>
<dbReference type="EMBL" id="U18997">
    <property type="protein sequence ID" value="AAA58150.1"/>
    <property type="molecule type" value="Genomic_DNA"/>
</dbReference>
<dbReference type="EMBL" id="U00096">
    <property type="protein sequence ID" value="AAC76378.1"/>
    <property type="molecule type" value="Genomic_DNA"/>
</dbReference>
<dbReference type="EMBL" id="AP009048">
    <property type="protein sequence ID" value="BAE77937.1"/>
    <property type="molecule type" value="Genomic_DNA"/>
</dbReference>
<dbReference type="PIR" id="D65129">
    <property type="entry name" value="D65129"/>
</dbReference>
<dbReference type="RefSeq" id="NP_417812.1">
    <property type="nucleotide sequence ID" value="NC_000913.3"/>
</dbReference>
<dbReference type="RefSeq" id="WP_000057356.1">
    <property type="nucleotide sequence ID" value="NZ_SSZK01000008.1"/>
</dbReference>
<dbReference type="BioGRID" id="4262473">
    <property type="interactions" value="18"/>
</dbReference>
<dbReference type="FunCoup" id="P45524">
    <property type="interactions" value="387"/>
</dbReference>
<dbReference type="IntAct" id="P45524">
    <property type="interactions" value="2"/>
</dbReference>
<dbReference type="STRING" id="511145.b3353"/>
<dbReference type="ESTHER" id="ecoli-yhet">
    <property type="family name" value="abh_upf0017"/>
</dbReference>
<dbReference type="MEROPS" id="S33.A46"/>
<dbReference type="PaxDb" id="511145-b3353"/>
<dbReference type="EnsemblBacteria" id="AAC76378">
    <property type="protein sequence ID" value="AAC76378"/>
    <property type="gene ID" value="b3353"/>
</dbReference>
<dbReference type="GeneID" id="947855"/>
<dbReference type="KEGG" id="ecj:JW3316"/>
<dbReference type="KEGG" id="eco:b3353"/>
<dbReference type="KEGG" id="ecoc:C3026_18210"/>
<dbReference type="PATRIC" id="fig|1411691.4.peg.3377"/>
<dbReference type="EchoBASE" id="EB2741"/>
<dbReference type="eggNOG" id="COG0429">
    <property type="taxonomic scope" value="Bacteria"/>
</dbReference>
<dbReference type="HOGENOM" id="CLU_032487_0_0_6"/>
<dbReference type="InParanoid" id="P45524"/>
<dbReference type="OMA" id="LDWHGPH"/>
<dbReference type="OrthoDB" id="332676at2"/>
<dbReference type="PhylomeDB" id="P45524"/>
<dbReference type="BioCyc" id="EcoCyc:G7718-MONOMER"/>
<dbReference type="PRO" id="PR:P45524"/>
<dbReference type="Proteomes" id="UP000000625">
    <property type="component" value="Chromosome"/>
</dbReference>
<dbReference type="GO" id="GO:0005886">
    <property type="term" value="C:plasma membrane"/>
    <property type="evidence" value="ECO:0007005"/>
    <property type="project" value="EcoCyc"/>
</dbReference>
<dbReference type="GO" id="GO:0047372">
    <property type="term" value="F:monoacylglycerol lipase activity"/>
    <property type="evidence" value="ECO:0000318"/>
    <property type="project" value="GO_Central"/>
</dbReference>
<dbReference type="GO" id="GO:0050526">
    <property type="term" value="F:poly(3-hydroxybutyrate) depolymerase activity"/>
    <property type="evidence" value="ECO:0000255"/>
    <property type="project" value="EcoliWiki"/>
</dbReference>
<dbReference type="GO" id="GO:0034338">
    <property type="term" value="F:short-chain carboxylesterase activity"/>
    <property type="evidence" value="ECO:0000318"/>
    <property type="project" value="GO_Central"/>
</dbReference>
<dbReference type="GO" id="GO:0006629">
    <property type="term" value="P:lipid metabolic process"/>
    <property type="evidence" value="ECO:0000318"/>
    <property type="project" value="GO_Central"/>
</dbReference>
<dbReference type="FunFam" id="3.40.50.1820:FF:000080">
    <property type="entry name" value="Alpha/beta hydrolase"/>
    <property type="match status" value="1"/>
</dbReference>
<dbReference type="Gene3D" id="3.40.50.1820">
    <property type="entry name" value="alpha/beta hydrolase"/>
    <property type="match status" value="1"/>
</dbReference>
<dbReference type="InterPro" id="IPR000073">
    <property type="entry name" value="AB_hydrolase_1"/>
</dbReference>
<dbReference type="InterPro" id="IPR000952">
    <property type="entry name" value="AB_hydrolase_4_CS"/>
</dbReference>
<dbReference type="InterPro" id="IPR050960">
    <property type="entry name" value="AB_hydrolase_4_sf"/>
</dbReference>
<dbReference type="InterPro" id="IPR029058">
    <property type="entry name" value="AB_hydrolase_fold"/>
</dbReference>
<dbReference type="InterPro" id="IPR012020">
    <property type="entry name" value="ABHD4"/>
</dbReference>
<dbReference type="NCBIfam" id="NF008218">
    <property type="entry name" value="PRK10985.1"/>
    <property type="match status" value="1"/>
</dbReference>
<dbReference type="PANTHER" id="PTHR10794">
    <property type="entry name" value="ABHYDROLASE DOMAIN-CONTAINING PROTEIN"/>
    <property type="match status" value="1"/>
</dbReference>
<dbReference type="PANTHER" id="PTHR10794:SF94">
    <property type="entry name" value="ESTERASE YHET-RELATED"/>
    <property type="match status" value="1"/>
</dbReference>
<dbReference type="Pfam" id="PF00561">
    <property type="entry name" value="Abhydrolase_1"/>
    <property type="match status" value="1"/>
</dbReference>
<dbReference type="PIRSF" id="PIRSF005211">
    <property type="entry name" value="Ab_hydro_YheT"/>
    <property type="match status" value="1"/>
</dbReference>
<dbReference type="SUPFAM" id="SSF53474">
    <property type="entry name" value="alpha/beta-Hydrolases"/>
    <property type="match status" value="1"/>
</dbReference>
<dbReference type="PROSITE" id="PS01133">
    <property type="entry name" value="UPF0017"/>
    <property type="match status" value="1"/>
</dbReference>